<proteinExistence type="inferred from homology"/>
<comment type="function">
    <text evidence="1">Responsible for synthesis of pseudouridine from uracil-55 in the psi GC loop of transfer RNAs.</text>
</comment>
<comment type="catalytic activity">
    <reaction evidence="1">
        <text>uridine(55) in tRNA = pseudouridine(55) in tRNA</text>
        <dbReference type="Rhea" id="RHEA:42532"/>
        <dbReference type="Rhea" id="RHEA-COMP:10101"/>
        <dbReference type="Rhea" id="RHEA-COMP:10102"/>
        <dbReference type="ChEBI" id="CHEBI:65314"/>
        <dbReference type="ChEBI" id="CHEBI:65315"/>
        <dbReference type="EC" id="5.4.99.25"/>
    </reaction>
</comment>
<comment type="similarity">
    <text evidence="1">Belongs to the pseudouridine synthase TruB family. Type 1 subfamily.</text>
</comment>
<feature type="chain" id="PRO_0000121792" description="tRNA pseudouridine synthase B">
    <location>
        <begin position="1"/>
        <end position="309"/>
    </location>
</feature>
<feature type="active site" description="Nucleophile" evidence="1">
    <location>
        <position position="39"/>
    </location>
</feature>
<dbReference type="EC" id="5.4.99.25" evidence="1"/>
<dbReference type="EMBL" id="AL009126">
    <property type="protein sequence ID" value="CAB13539.1"/>
    <property type="molecule type" value="Genomic_DNA"/>
</dbReference>
<dbReference type="EMBL" id="Z18631">
    <property type="protein sequence ID" value="CAA79237.1"/>
    <property type="molecule type" value="Genomic_DNA"/>
</dbReference>
<dbReference type="PIR" id="G69726">
    <property type="entry name" value="G69726"/>
</dbReference>
<dbReference type="RefSeq" id="NP_389548.1">
    <property type="nucleotide sequence ID" value="NC_000964.3"/>
</dbReference>
<dbReference type="RefSeq" id="WP_003244678.1">
    <property type="nucleotide sequence ID" value="NZ_OZ025638.1"/>
</dbReference>
<dbReference type="SMR" id="P32732"/>
<dbReference type="FunCoup" id="P32732">
    <property type="interactions" value="540"/>
</dbReference>
<dbReference type="STRING" id="224308.BSU16660"/>
<dbReference type="PaxDb" id="224308-BSU16660"/>
<dbReference type="EnsemblBacteria" id="CAB13539">
    <property type="protein sequence ID" value="CAB13539"/>
    <property type="gene ID" value="BSU_16660"/>
</dbReference>
<dbReference type="GeneID" id="939638"/>
<dbReference type="KEGG" id="bsu:BSU16660"/>
<dbReference type="PATRIC" id="fig|224308.179.peg.1807"/>
<dbReference type="eggNOG" id="COG0130">
    <property type="taxonomic scope" value="Bacteria"/>
</dbReference>
<dbReference type="InParanoid" id="P32732"/>
<dbReference type="OrthoDB" id="9802309at2"/>
<dbReference type="PhylomeDB" id="P32732"/>
<dbReference type="BioCyc" id="BSUB:BSU16660-MONOMER"/>
<dbReference type="Proteomes" id="UP000001570">
    <property type="component" value="Chromosome"/>
</dbReference>
<dbReference type="GO" id="GO:0009982">
    <property type="term" value="F:pseudouridine synthase activity"/>
    <property type="evidence" value="ECO:0000318"/>
    <property type="project" value="GO_Central"/>
</dbReference>
<dbReference type="GO" id="GO:0003723">
    <property type="term" value="F:RNA binding"/>
    <property type="evidence" value="ECO:0007669"/>
    <property type="project" value="InterPro"/>
</dbReference>
<dbReference type="GO" id="GO:0160148">
    <property type="term" value="F:tRNA pseudouridine(55) synthase activity"/>
    <property type="evidence" value="ECO:0007669"/>
    <property type="project" value="UniProtKB-EC"/>
</dbReference>
<dbReference type="GO" id="GO:1990481">
    <property type="term" value="P:mRNA pseudouridine synthesis"/>
    <property type="evidence" value="ECO:0000318"/>
    <property type="project" value="GO_Central"/>
</dbReference>
<dbReference type="GO" id="GO:0006400">
    <property type="term" value="P:tRNA modification"/>
    <property type="evidence" value="ECO:0000318"/>
    <property type="project" value="GO_Central"/>
</dbReference>
<dbReference type="GO" id="GO:0031119">
    <property type="term" value="P:tRNA pseudouridine synthesis"/>
    <property type="evidence" value="ECO:0007669"/>
    <property type="project" value="UniProtKB-UniRule"/>
</dbReference>
<dbReference type="CDD" id="cd02573">
    <property type="entry name" value="PseudoU_synth_EcTruB"/>
    <property type="match status" value="1"/>
</dbReference>
<dbReference type="FunFam" id="3.30.2350.10:FF:000011">
    <property type="entry name" value="tRNA pseudouridine synthase B"/>
    <property type="match status" value="1"/>
</dbReference>
<dbReference type="Gene3D" id="3.30.2350.10">
    <property type="entry name" value="Pseudouridine synthase"/>
    <property type="match status" value="1"/>
</dbReference>
<dbReference type="HAMAP" id="MF_01080">
    <property type="entry name" value="TruB_bact"/>
    <property type="match status" value="1"/>
</dbReference>
<dbReference type="InterPro" id="IPR020103">
    <property type="entry name" value="PsdUridine_synth_cat_dom_sf"/>
</dbReference>
<dbReference type="InterPro" id="IPR002501">
    <property type="entry name" value="PsdUridine_synth_N"/>
</dbReference>
<dbReference type="InterPro" id="IPR014780">
    <property type="entry name" value="tRNA_psdUridine_synth_TruB"/>
</dbReference>
<dbReference type="InterPro" id="IPR032819">
    <property type="entry name" value="TruB_C"/>
</dbReference>
<dbReference type="NCBIfam" id="TIGR00431">
    <property type="entry name" value="TruB"/>
    <property type="match status" value="1"/>
</dbReference>
<dbReference type="PANTHER" id="PTHR13767:SF2">
    <property type="entry name" value="PSEUDOURIDYLATE SYNTHASE TRUB1"/>
    <property type="match status" value="1"/>
</dbReference>
<dbReference type="PANTHER" id="PTHR13767">
    <property type="entry name" value="TRNA-PSEUDOURIDINE SYNTHASE"/>
    <property type="match status" value="1"/>
</dbReference>
<dbReference type="Pfam" id="PF16198">
    <property type="entry name" value="TruB_C_2"/>
    <property type="match status" value="1"/>
</dbReference>
<dbReference type="Pfam" id="PF01509">
    <property type="entry name" value="TruB_N"/>
    <property type="match status" value="1"/>
</dbReference>
<dbReference type="SUPFAM" id="SSF55120">
    <property type="entry name" value="Pseudouridine synthase"/>
    <property type="match status" value="1"/>
</dbReference>
<organism>
    <name type="scientific">Bacillus subtilis (strain 168)</name>
    <dbReference type="NCBI Taxonomy" id="224308"/>
    <lineage>
        <taxon>Bacteria</taxon>
        <taxon>Bacillati</taxon>
        <taxon>Bacillota</taxon>
        <taxon>Bacilli</taxon>
        <taxon>Bacillales</taxon>
        <taxon>Bacillaceae</taxon>
        <taxon>Bacillus</taxon>
    </lineage>
</organism>
<gene>
    <name evidence="1" type="primary">truB</name>
    <name type="synonym">ylxN</name>
    <name type="synonym">ymxF</name>
    <name type="ordered locus">BSU16660</name>
</gene>
<reference key="1">
    <citation type="journal article" date="1997" name="Nature">
        <title>The complete genome sequence of the Gram-positive bacterium Bacillus subtilis.</title>
        <authorList>
            <person name="Kunst F."/>
            <person name="Ogasawara N."/>
            <person name="Moszer I."/>
            <person name="Albertini A.M."/>
            <person name="Alloni G."/>
            <person name="Azevedo V."/>
            <person name="Bertero M.G."/>
            <person name="Bessieres P."/>
            <person name="Bolotin A."/>
            <person name="Borchert S."/>
            <person name="Borriss R."/>
            <person name="Boursier L."/>
            <person name="Brans A."/>
            <person name="Braun M."/>
            <person name="Brignell S.C."/>
            <person name="Bron S."/>
            <person name="Brouillet S."/>
            <person name="Bruschi C.V."/>
            <person name="Caldwell B."/>
            <person name="Capuano V."/>
            <person name="Carter N.M."/>
            <person name="Choi S.-K."/>
            <person name="Codani J.-J."/>
            <person name="Connerton I.F."/>
            <person name="Cummings N.J."/>
            <person name="Daniel R.A."/>
            <person name="Denizot F."/>
            <person name="Devine K.M."/>
            <person name="Duesterhoeft A."/>
            <person name="Ehrlich S.D."/>
            <person name="Emmerson P.T."/>
            <person name="Entian K.-D."/>
            <person name="Errington J."/>
            <person name="Fabret C."/>
            <person name="Ferrari E."/>
            <person name="Foulger D."/>
            <person name="Fritz C."/>
            <person name="Fujita M."/>
            <person name="Fujita Y."/>
            <person name="Fuma S."/>
            <person name="Galizzi A."/>
            <person name="Galleron N."/>
            <person name="Ghim S.-Y."/>
            <person name="Glaser P."/>
            <person name="Goffeau A."/>
            <person name="Golightly E.J."/>
            <person name="Grandi G."/>
            <person name="Guiseppi G."/>
            <person name="Guy B.J."/>
            <person name="Haga K."/>
            <person name="Haiech J."/>
            <person name="Harwood C.R."/>
            <person name="Henaut A."/>
            <person name="Hilbert H."/>
            <person name="Holsappel S."/>
            <person name="Hosono S."/>
            <person name="Hullo M.-F."/>
            <person name="Itaya M."/>
            <person name="Jones L.-M."/>
            <person name="Joris B."/>
            <person name="Karamata D."/>
            <person name="Kasahara Y."/>
            <person name="Klaerr-Blanchard M."/>
            <person name="Klein C."/>
            <person name="Kobayashi Y."/>
            <person name="Koetter P."/>
            <person name="Koningstein G."/>
            <person name="Krogh S."/>
            <person name="Kumano M."/>
            <person name="Kurita K."/>
            <person name="Lapidus A."/>
            <person name="Lardinois S."/>
            <person name="Lauber J."/>
            <person name="Lazarevic V."/>
            <person name="Lee S.-M."/>
            <person name="Levine A."/>
            <person name="Liu H."/>
            <person name="Masuda S."/>
            <person name="Mauel C."/>
            <person name="Medigue C."/>
            <person name="Medina N."/>
            <person name="Mellado R.P."/>
            <person name="Mizuno M."/>
            <person name="Moestl D."/>
            <person name="Nakai S."/>
            <person name="Noback M."/>
            <person name="Noone D."/>
            <person name="O'Reilly M."/>
            <person name="Ogawa K."/>
            <person name="Ogiwara A."/>
            <person name="Oudega B."/>
            <person name="Park S.-H."/>
            <person name="Parro V."/>
            <person name="Pohl T.M."/>
            <person name="Portetelle D."/>
            <person name="Porwollik S."/>
            <person name="Prescott A.M."/>
            <person name="Presecan E."/>
            <person name="Pujic P."/>
            <person name="Purnelle B."/>
            <person name="Rapoport G."/>
            <person name="Rey M."/>
            <person name="Reynolds S."/>
            <person name="Rieger M."/>
            <person name="Rivolta C."/>
            <person name="Rocha E."/>
            <person name="Roche B."/>
            <person name="Rose M."/>
            <person name="Sadaie Y."/>
            <person name="Sato T."/>
            <person name="Scanlan E."/>
            <person name="Schleich S."/>
            <person name="Schroeter R."/>
            <person name="Scoffone F."/>
            <person name="Sekiguchi J."/>
            <person name="Sekowska A."/>
            <person name="Seror S.J."/>
            <person name="Serror P."/>
            <person name="Shin B.-S."/>
            <person name="Soldo B."/>
            <person name="Sorokin A."/>
            <person name="Tacconi E."/>
            <person name="Takagi T."/>
            <person name="Takahashi H."/>
            <person name="Takemaru K."/>
            <person name="Takeuchi M."/>
            <person name="Tamakoshi A."/>
            <person name="Tanaka T."/>
            <person name="Terpstra P."/>
            <person name="Tognoni A."/>
            <person name="Tosato V."/>
            <person name="Uchiyama S."/>
            <person name="Vandenbol M."/>
            <person name="Vannier F."/>
            <person name="Vassarotti A."/>
            <person name="Viari A."/>
            <person name="Wambutt R."/>
            <person name="Wedler E."/>
            <person name="Wedler H."/>
            <person name="Weitzenegger T."/>
            <person name="Winters P."/>
            <person name="Wipat A."/>
            <person name="Yamamoto H."/>
            <person name="Yamane K."/>
            <person name="Yasumoto K."/>
            <person name="Yata K."/>
            <person name="Yoshida K."/>
            <person name="Yoshikawa H.-F."/>
            <person name="Zumstein E."/>
            <person name="Yoshikawa H."/>
            <person name="Danchin A."/>
        </authorList>
    </citation>
    <scope>NUCLEOTIDE SEQUENCE [LARGE SCALE GENOMIC DNA]</scope>
    <source>
        <strain>168</strain>
    </source>
</reference>
<reference key="2">
    <citation type="journal article" date="1993" name="J. Bacteriol.">
        <title>Similar organization of the nusA-infB operon in Bacillus subtilis and Escherichia coli.</title>
        <authorList>
            <person name="Shazand K."/>
            <person name="Tucker J."/>
            <person name="Grunberg-Manago M."/>
            <person name="Rabinowitz J.C."/>
            <person name="Leighton T."/>
        </authorList>
    </citation>
    <scope>NUCLEOTIDE SEQUENCE [GENOMIC DNA] OF 1-65</scope>
    <source>
        <strain>168</strain>
    </source>
</reference>
<keyword id="KW-0413">Isomerase</keyword>
<keyword id="KW-1185">Reference proteome</keyword>
<keyword id="KW-0819">tRNA processing</keyword>
<name>TRUB_BACSU</name>
<evidence type="ECO:0000255" key="1">
    <source>
        <dbReference type="HAMAP-Rule" id="MF_01080"/>
    </source>
</evidence>
<sequence>MVNGVLLLHKPVGMTSHDCVMKIRKLLKTKKVGHTGTLDPEVSGVLPICVGRATKIVEYLTEKSKTYDAEITLGFSTTTEDQTGETVETKPVNHDIDKADVEKVLNSLKGKQEQIPPMYSAVKVNGKKLYEYARAGIEVERPKRMITIEDIALTTEIKHHGETASFRFTVTCSKGTYVRTLAVMIGEKLGYPAHMSHLIRTASGDFSLDECFTFDELEAQAQSGTVEEHTVPIERALNHLPKWIISDTLAKKVENGALLETPEQFSEMTSGDRIAVFTESGTCLAIYFPHPAKKGLLKPAKVLMQKSEQ</sequence>
<protein>
    <recommendedName>
        <fullName evidence="1">tRNA pseudouridine synthase B</fullName>
        <ecNumber evidence="1">5.4.99.25</ecNumber>
    </recommendedName>
    <alternativeName>
        <fullName evidence="1">tRNA pseudouridine(55) synthase</fullName>
        <shortName evidence="1">Psi55 synthase</shortName>
    </alternativeName>
    <alternativeName>
        <fullName evidence="1">tRNA pseudouridylate synthase</fullName>
    </alternativeName>
    <alternativeName>
        <fullName evidence="1">tRNA-uridine isomerase</fullName>
    </alternativeName>
</protein>
<accession>P32732</accession>